<sequence length="135" mass="15785">MKNSSKIFVVLSIILFYVISSCHGYNPFAKTVVTVTNNISPQTTLTISCRSKDDDLGEHLLLHGQAFLWKFRPSWFRTTLFTCKFLWNNNVKWFDTYRSDRDQGHCYSCNWSINADSACISGNFNKKFDRCYPWN</sequence>
<proteinExistence type="inferred from homology"/>
<gene>
    <name evidence="3" type="primary">SPH29</name>
    <name evidence="4" type="ordered locus">At5g37035</name>
    <name evidence="4" type="ORF">MJG14</name>
</gene>
<organism>
    <name type="scientific">Arabidopsis thaliana</name>
    <name type="common">Mouse-ear cress</name>
    <dbReference type="NCBI Taxonomy" id="3702"/>
    <lineage>
        <taxon>Eukaryota</taxon>
        <taxon>Viridiplantae</taxon>
        <taxon>Streptophyta</taxon>
        <taxon>Embryophyta</taxon>
        <taxon>Tracheophyta</taxon>
        <taxon>Spermatophyta</taxon>
        <taxon>Magnoliopsida</taxon>
        <taxon>eudicotyledons</taxon>
        <taxon>Gunneridae</taxon>
        <taxon>Pentapetalae</taxon>
        <taxon>rosids</taxon>
        <taxon>malvids</taxon>
        <taxon>Brassicales</taxon>
        <taxon>Brassicaceae</taxon>
        <taxon>Camelineae</taxon>
        <taxon>Arabidopsis</taxon>
    </lineage>
</organism>
<protein>
    <recommendedName>
        <fullName evidence="3">S-protein homolog 29</fullName>
    </recommendedName>
</protein>
<reference key="1">
    <citation type="journal article" date="1999" name="DNA Res.">
        <title>Structural analysis of Arabidopsis thaliana chromosome 5. IX. Sequence features of the regions of 1,011,550 bp covered by seventeen P1 and TAC clones.</title>
        <authorList>
            <person name="Kaneko T."/>
            <person name="Katoh T."/>
            <person name="Sato S."/>
            <person name="Nakamura Y."/>
            <person name="Asamizu E."/>
            <person name="Kotani H."/>
            <person name="Miyajima N."/>
            <person name="Tabata S."/>
        </authorList>
    </citation>
    <scope>NUCLEOTIDE SEQUENCE [LARGE SCALE GENOMIC DNA]</scope>
    <source>
        <strain>cv. Columbia</strain>
    </source>
</reference>
<reference key="2">
    <citation type="journal article" date="2017" name="Plant J.">
        <title>Araport11: a complete reannotation of the Arabidopsis thaliana reference genome.</title>
        <authorList>
            <person name="Cheng C.Y."/>
            <person name="Krishnakumar V."/>
            <person name="Chan A.P."/>
            <person name="Thibaud-Nissen F."/>
            <person name="Schobel S."/>
            <person name="Town C.D."/>
        </authorList>
    </citation>
    <scope>GENOME REANNOTATION</scope>
    <source>
        <strain>cv. Columbia</strain>
    </source>
</reference>
<reference key="3">
    <citation type="journal article" date="1999" name="Plant Mol. Biol.">
        <title>Analysis of Arabidopsis genome sequence reveals a large new gene family in plants.</title>
        <authorList>
            <person name="Ride J.P."/>
            <person name="Davies E.M."/>
            <person name="Franklin F.C.H."/>
            <person name="Marshall D.F."/>
        </authorList>
    </citation>
    <scope>GENE FAMILY</scope>
    <scope>NOMENCLATURE</scope>
    <source>
        <strain>cv. Columbia</strain>
    </source>
</reference>
<keyword id="KW-0325">Glycoprotein</keyword>
<keyword id="KW-1185">Reference proteome</keyword>
<keyword id="KW-0964">Secreted</keyword>
<keyword id="KW-0713">Self-incompatibility</keyword>
<keyword id="KW-0732">Signal</keyword>
<dbReference type="EMBL" id="AB017068">
    <property type="status" value="NOT_ANNOTATED_CDS"/>
    <property type="molecule type" value="Genomic_DNA"/>
</dbReference>
<dbReference type="EMBL" id="CP002688">
    <property type="status" value="NOT_ANNOTATED_CDS"/>
    <property type="molecule type" value="Genomic_DNA"/>
</dbReference>
<dbReference type="SMR" id="P0DN93"/>
<dbReference type="GlyCosmos" id="P0DN93">
    <property type="glycosylation" value="1 site, No reported glycans"/>
</dbReference>
<dbReference type="GlyGen" id="P0DN93">
    <property type="glycosylation" value="1 site"/>
</dbReference>
<dbReference type="PeptideAtlas" id="P0DN93"/>
<dbReference type="Araport" id="AT5G37035"/>
<dbReference type="TAIR" id="AT5G37035"/>
<dbReference type="InParanoid" id="P0DN93"/>
<dbReference type="PRO" id="PR:P0DN93"/>
<dbReference type="Proteomes" id="UP000006548">
    <property type="component" value="Chromosome 5"/>
</dbReference>
<dbReference type="ExpressionAtlas" id="P0DN93">
    <property type="expression patterns" value="baseline and differential"/>
</dbReference>
<dbReference type="GO" id="GO:0005576">
    <property type="term" value="C:extracellular region"/>
    <property type="evidence" value="ECO:0007669"/>
    <property type="project" value="UniProtKB-SubCell"/>
</dbReference>
<dbReference type="GO" id="GO:0060320">
    <property type="term" value="P:rejection of self pollen"/>
    <property type="evidence" value="ECO:0007669"/>
    <property type="project" value="UniProtKB-KW"/>
</dbReference>
<dbReference type="InterPro" id="IPR010264">
    <property type="entry name" value="Self-incomp_S1"/>
</dbReference>
<dbReference type="PANTHER" id="PTHR31232">
    <property type="match status" value="1"/>
</dbReference>
<dbReference type="PANTHER" id="PTHR31232:SF43">
    <property type="entry name" value="S-PROTEIN HOMOLOG 29-RELATED"/>
    <property type="match status" value="1"/>
</dbReference>
<dbReference type="Pfam" id="PF05938">
    <property type="entry name" value="Self-incomp_S1"/>
    <property type="match status" value="1"/>
</dbReference>
<name>SPH29_ARATH</name>
<evidence type="ECO:0000255" key="1"/>
<evidence type="ECO:0000255" key="2">
    <source>
        <dbReference type="PROSITE-ProRule" id="PRU00498"/>
    </source>
</evidence>
<evidence type="ECO:0000303" key="3">
    <source>
    </source>
</evidence>
<evidence type="ECO:0000305" key="4"/>
<evidence type="ECO:0000305" key="5">
    <source>
    </source>
</evidence>
<feature type="signal peptide" evidence="1">
    <location>
        <begin position="1"/>
        <end position="24"/>
    </location>
</feature>
<feature type="chain" id="PRO_0000439576" description="S-protein homolog 29">
    <location>
        <begin position="25"/>
        <end position="135"/>
    </location>
</feature>
<feature type="glycosylation site" description="N-linked (GlcNAc...) asparagine" evidence="2">
    <location>
        <position position="110"/>
    </location>
</feature>
<comment type="subcellular location">
    <subcellularLocation>
        <location evidence="5">Secreted</location>
    </subcellularLocation>
</comment>
<comment type="similarity">
    <text evidence="4">Belongs to the plant self-incompatibility (S1) protein family.</text>
</comment>
<accession>P0DN93</accession>